<evidence type="ECO:0000255" key="1">
    <source>
        <dbReference type="HAMAP-Rule" id="MF_01445"/>
    </source>
</evidence>
<dbReference type="EC" id="2.3.1.234" evidence="1"/>
<dbReference type="EMBL" id="CP000115">
    <property type="protein sequence ID" value="ABA03737.1"/>
    <property type="molecule type" value="Genomic_DNA"/>
</dbReference>
<dbReference type="RefSeq" id="WP_011313801.1">
    <property type="nucleotide sequence ID" value="NC_007406.1"/>
</dbReference>
<dbReference type="SMR" id="Q3SVF4"/>
<dbReference type="STRING" id="323098.Nwi_0470"/>
<dbReference type="KEGG" id="nwi:Nwi_0470"/>
<dbReference type="eggNOG" id="COG0533">
    <property type="taxonomic scope" value="Bacteria"/>
</dbReference>
<dbReference type="HOGENOM" id="CLU_023208_0_2_5"/>
<dbReference type="OrthoDB" id="9806197at2"/>
<dbReference type="Proteomes" id="UP000002531">
    <property type="component" value="Chromosome"/>
</dbReference>
<dbReference type="GO" id="GO:0005737">
    <property type="term" value="C:cytoplasm"/>
    <property type="evidence" value="ECO:0007669"/>
    <property type="project" value="UniProtKB-SubCell"/>
</dbReference>
<dbReference type="GO" id="GO:0005506">
    <property type="term" value="F:iron ion binding"/>
    <property type="evidence" value="ECO:0007669"/>
    <property type="project" value="UniProtKB-UniRule"/>
</dbReference>
<dbReference type="GO" id="GO:0061711">
    <property type="term" value="F:N(6)-L-threonylcarbamoyladenine synthase activity"/>
    <property type="evidence" value="ECO:0007669"/>
    <property type="project" value="UniProtKB-EC"/>
</dbReference>
<dbReference type="GO" id="GO:0002949">
    <property type="term" value="P:tRNA threonylcarbamoyladenosine modification"/>
    <property type="evidence" value="ECO:0007669"/>
    <property type="project" value="UniProtKB-UniRule"/>
</dbReference>
<dbReference type="CDD" id="cd24133">
    <property type="entry name" value="ASKHA_NBD_TsaD_bac"/>
    <property type="match status" value="1"/>
</dbReference>
<dbReference type="FunFam" id="3.30.420.40:FF:000012">
    <property type="entry name" value="tRNA N6-adenosine threonylcarbamoyltransferase"/>
    <property type="match status" value="1"/>
</dbReference>
<dbReference type="Gene3D" id="3.30.420.40">
    <property type="match status" value="2"/>
</dbReference>
<dbReference type="HAMAP" id="MF_01445">
    <property type="entry name" value="TsaD"/>
    <property type="match status" value="1"/>
</dbReference>
<dbReference type="InterPro" id="IPR043129">
    <property type="entry name" value="ATPase_NBD"/>
</dbReference>
<dbReference type="InterPro" id="IPR000905">
    <property type="entry name" value="Gcp-like_dom"/>
</dbReference>
<dbReference type="InterPro" id="IPR017861">
    <property type="entry name" value="KAE1/TsaD"/>
</dbReference>
<dbReference type="InterPro" id="IPR022450">
    <property type="entry name" value="TsaD"/>
</dbReference>
<dbReference type="NCBIfam" id="TIGR00329">
    <property type="entry name" value="gcp_kae1"/>
    <property type="match status" value="1"/>
</dbReference>
<dbReference type="NCBIfam" id="TIGR03723">
    <property type="entry name" value="T6A_TsaD_YgjD"/>
    <property type="match status" value="1"/>
</dbReference>
<dbReference type="PANTHER" id="PTHR11735">
    <property type="entry name" value="TRNA N6-ADENOSINE THREONYLCARBAMOYLTRANSFERASE"/>
    <property type="match status" value="1"/>
</dbReference>
<dbReference type="PANTHER" id="PTHR11735:SF6">
    <property type="entry name" value="TRNA N6-ADENOSINE THREONYLCARBAMOYLTRANSFERASE, MITOCHONDRIAL"/>
    <property type="match status" value="1"/>
</dbReference>
<dbReference type="Pfam" id="PF00814">
    <property type="entry name" value="TsaD"/>
    <property type="match status" value="1"/>
</dbReference>
<dbReference type="PRINTS" id="PR00789">
    <property type="entry name" value="OSIALOPTASE"/>
</dbReference>
<dbReference type="SUPFAM" id="SSF53067">
    <property type="entry name" value="Actin-like ATPase domain"/>
    <property type="match status" value="2"/>
</dbReference>
<reference key="1">
    <citation type="journal article" date="2006" name="Appl. Environ. Microbiol.">
        <title>Genome sequence of the chemolithoautotrophic nitrite-oxidizing bacterium Nitrobacter winogradskyi Nb-255.</title>
        <authorList>
            <person name="Starkenburg S.R."/>
            <person name="Chain P.S.G."/>
            <person name="Sayavedra-Soto L.A."/>
            <person name="Hauser L."/>
            <person name="Land M.L."/>
            <person name="Larimer F.W."/>
            <person name="Malfatti S.A."/>
            <person name="Klotz M.G."/>
            <person name="Bottomley P.J."/>
            <person name="Arp D.J."/>
            <person name="Hickey W.J."/>
        </authorList>
    </citation>
    <scope>NUCLEOTIDE SEQUENCE [LARGE SCALE GENOMIC DNA]</scope>
    <source>
        <strain>ATCC 25391 / DSM 10237 / CIP 104748 / NCIMB 11846 / Nb-255</strain>
    </source>
</reference>
<sequence>MLVLGIETTCDETAAAVVERLPDGSARILSNIVRSQTEEHAPYGGVVPEIAARAHVELLDGLIARAMTESGVGFRQLSGVAAAAGPGLIGGVIVGLTTAKAIALVHGTPLTAVNHLEAHALTPRLTSRLEFPYCLFLASGGHTQIVAVLGVGNYVRLGTTVDDAMGEAFDKVAKMLGLPYPGGPEVERAAASGDATRFNFPRPMLGRPDANFSLSGLKTAVRNEAARIDPLEPRDISDLCAGFQAAVLEATADRLGVGLRLFEERFGRPRALVAAGGVAANQAIRASLEGVAAKARTSLIIPPPALCTDNGAMIAWAGAERLAAGLTDSLETPPRARWLLDANAQAPAGFANTRAGF</sequence>
<name>TSAD_NITWN</name>
<organism>
    <name type="scientific">Nitrobacter winogradskyi (strain ATCC 25391 / DSM 10237 / CIP 104748 / NCIMB 11846 / Nb-255)</name>
    <dbReference type="NCBI Taxonomy" id="323098"/>
    <lineage>
        <taxon>Bacteria</taxon>
        <taxon>Pseudomonadati</taxon>
        <taxon>Pseudomonadota</taxon>
        <taxon>Alphaproteobacteria</taxon>
        <taxon>Hyphomicrobiales</taxon>
        <taxon>Nitrobacteraceae</taxon>
        <taxon>Nitrobacter</taxon>
    </lineage>
</organism>
<proteinExistence type="inferred from homology"/>
<keyword id="KW-0012">Acyltransferase</keyword>
<keyword id="KW-0963">Cytoplasm</keyword>
<keyword id="KW-0408">Iron</keyword>
<keyword id="KW-0479">Metal-binding</keyword>
<keyword id="KW-1185">Reference proteome</keyword>
<keyword id="KW-0808">Transferase</keyword>
<keyword id="KW-0819">tRNA processing</keyword>
<comment type="function">
    <text evidence="1">Required for the formation of a threonylcarbamoyl group on adenosine at position 37 (t(6)A37) in tRNAs that read codons beginning with adenine. Is involved in the transfer of the threonylcarbamoyl moiety of threonylcarbamoyl-AMP (TC-AMP) to the N6 group of A37, together with TsaE and TsaB. TsaD likely plays a direct catalytic role in this reaction.</text>
</comment>
<comment type="catalytic activity">
    <reaction evidence="1">
        <text>L-threonylcarbamoyladenylate + adenosine(37) in tRNA = N(6)-L-threonylcarbamoyladenosine(37) in tRNA + AMP + H(+)</text>
        <dbReference type="Rhea" id="RHEA:37059"/>
        <dbReference type="Rhea" id="RHEA-COMP:10162"/>
        <dbReference type="Rhea" id="RHEA-COMP:10163"/>
        <dbReference type="ChEBI" id="CHEBI:15378"/>
        <dbReference type="ChEBI" id="CHEBI:73682"/>
        <dbReference type="ChEBI" id="CHEBI:74411"/>
        <dbReference type="ChEBI" id="CHEBI:74418"/>
        <dbReference type="ChEBI" id="CHEBI:456215"/>
        <dbReference type="EC" id="2.3.1.234"/>
    </reaction>
</comment>
<comment type="cofactor">
    <cofactor evidence="1">
        <name>Fe(2+)</name>
        <dbReference type="ChEBI" id="CHEBI:29033"/>
    </cofactor>
    <text evidence="1">Binds 1 Fe(2+) ion per subunit.</text>
</comment>
<comment type="subcellular location">
    <subcellularLocation>
        <location evidence="1">Cytoplasm</location>
    </subcellularLocation>
</comment>
<comment type="similarity">
    <text evidence="1">Belongs to the KAE1 / TsaD family.</text>
</comment>
<protein>
    <recommendedName>
        <fullName evidence="1">tRNA N6-adenosine threonylcarbamoyltransferase</fullName>
        <ecNumber evidence="1">2.3.1.234</ecNumber>
    </recommendedName>
    <alternativeName>
        <fullName evidence="1">N6-L-threonylcarbamoyladenine synthase</fullName>
        <shortName evidence="1">t(6)A synthase</shortName>
    </alternativeName>
    <alternativeName>
        <fullName evidence="1">t(6)A37 threonylcarbamoyladenosine biosynthesis protein TsaD</fullName>
    </alternativeName>
    <alternativeName>
        <fullName evidence="1">tRNA threonylcarbamoyladenosine biosynthesis protein TsaD</fullName>
    </alternativeName>
</protein>
<feature type="chain" id="PRO_0000303454" description="tRNA N6-adenosine threonylcarbamoyltransferase">
    <location>
        <begin position="1"/>
        <end position="357"/>
    </location>
</feature>
<feature type="binding site" evidence="1">
    <location>
        <position position="115"/>
    </location>
    <ligand>
        <name>Fe cation</name>
        <dbReference type="ChEBI" id="CHEBI:24875"/>
    </ligand>
</feature>
<feature type="binding site" evidence="1">
    <location>
        <position position="119"/>
    </location>
    <ligand>
        <name>Fe cation</name>
        <dbReference type="ChEBI" id="CHEBI:24875"/>
    </ligand>
</feature>
<feature type="binding site" evidence="1">
    <location>
        <begin position="137"/>
        <end position="141"/>
    </location>
    <ligand>
        <name>substrate</name>
    </ligand>
</feature>
<feature type="binding site" evidence="1">
    <location>
        <position position="170"/>
    </location>
    <ligand>
        <name>substrate</name>
    </ligand>
</feature>
<feature type="binding site" evidence="1">
    <location>
        <position position="183"/>
    </location>
    <ligand>
        <name>substrate</name>
    </ligand>
</feature>
<feature type="binding site" evidence="1">
    <location>
        <position position="281"/>
    </location>
    <ligand>
        <name>substrate</name>
    </ligand>
</feature>
<feature type="binding site" evidence="1">
    <location>
        <position position="309"/>
    </location>
    <ligand>
        <name>Fe cation</name>
        <dbReference type="ChEBI" id="CHEBI:24875"/>
    </ligand>
</feature>
<accession>Q3SVF4</accession>
<gene>
    <name evidence="1" type="primary">tsaD</name>
    <name type="synonym">gcp</name>
    <name type="ordered locus">Nwi_0470</name>
</gene>